<dbReference type="EMBL" id="CP000764">
    <property type="protein sequence ID" value="ABS22716.1"/>
    <property type="molecule type" value="Genomic_DNA"/>
</dbReference>
<dbReference type="RefSeq" id="WP_012094920.1">
    <property type="nucleotide sequence ID" value="NC_009674.1"/>
</dbReference>
<dbReference type="SMR" id="A7GRF8"/>
<dbReference type="STRING" id="315749.Bcer98_2480"/>
<dbReference type="GeneID" id="33897735"/>
<dbReference type="KEGG" id="bcy:Bcer98_2480"/>
<dbReference type="eggNOG" id="COG4465">
    <property type="taxonomic scope" value="Bacteria"/>
</dbReference>
<dbReference type="HOGENOM" id="CLU_089581_0_0_9"/>
<dbReference type="OrthoDB" id="2056at2"/>
<dbReference type="Proteomes" id="UP000002300">
    <property type="component" value="Chromosome"/>
</dbReference>
<dbReference type="GO" id="GO:0005737">
    <property type="term" value="C:cytoplasm"/>
    <property type="evidence" value="ECO:0007669"/>
    <property type="project" value="UniProtKB-SubCell"/>
</dbReference>
<dbReference type="GO" id="GO:0003677">
    <property type="term" value="F:DNA binding"/>
    <property type="evidence" value="ECO:0007669"/>
    <property type="project" value="UniProtKB-UniRule"/>
</dbReference>
<dbReference type="GO" id="GO:0003700">
    <property type="term" value="F:DNA-binding transcription factor activity"/>
    <property type="evidence" value="ECO:0007669"/>
    <property type="project" value="InterPro"/>
</dbReference>
<dbReference type="GO" id="GO:0005525">
    <property type="term" value="F:GTP binding"/>
    <property type="evidence" value="ECO:0007669"/>
    <property type="project" value="InterPro"/>
</dbReference>
<dbReference type="GO" id="GO:0045892">
    <property type="term" value="P:negative regulation of DNA-templated transcription"/>
    <property type="evidence" value="ECO:0007669"/>
    <property type="project" value="UniProtKB-UniRule"/>
</dbReference>
<dbReference type="FunFam" id="1.10.10.10:FF:000034">
    <property type="entry name" value="GTP-sensing transcriptional pleiotropic repressor CodY"/>
    <property type="match status" value="1"/>
</dbReference>
<dbReference type="FunFam" id="3.30.450.40:FF:000003">
    <property type="entry name" value="GTP-sensing transcriptional pleiotropic repressor CodY"/>
    <property type="match status" value="1"/>
</dbReference>
<dbReference type="Gene3D" id="3.30.450.40">
    <property type="match status" value="1"/>
</dbReference>
<dbReference type="Gene3D" id="1.10.10.10">
    <property type="entry name" value="Winged helix-like DNA-binding domain superfamily/Winged helix DNA-binding domain"/>
    <property type="match status" value="1"/>
</dbReference>
<dbReference type="HAMAP" id="MF_00621">
    <property type="entry name" value="HTH_type_CodY"/>
    <property type="match status" value="1"/>
</dbReference>
<dbReference type="InterPro" id="IPR014154">
    <property type="entry name" value="CodY"/>
</dbReference>
<dbReference type="InterPro" id="IPR029016">
    <property type="entry name" value="GAF-like_dom_sf"/>
</dbReference>
<dbReference type="InterPro" id="IPR013198">
    <property type="entry name" value="GTP_trans_reg_CodY_C"/>
</dbReference>
<dbReference type="InterPro" id="IPR010312">
    <property type="entry name" value="Transc_reg_CodY_N"/>
</dbReference>
<dbReference type="InterPro" id="IPR036388">
    <property type="entry name" value="WH-like_DNA-bd_sf"/>
</dbReference>
<dbReference type="InterPro" id="IPR036390">
    <property type="entry name" value="WH_DNA-bd_sf"/>
</dbReference>
<dbReference type="NCBIfam" id="TIGR02787">
    <property type="entry name" value="codY_Gpos"/>
    <property type="match status" value="1"/>
</dbReference>
<dbReference type="NCBIfam" id="NF003170">
    <property type="entry name" value="PRK04158.1"/>
    <property type="match status" value="1"/>
</dbReference>
<dbReference type="PANTHER" id="PTHR40062:SF1">
    <property type="entry name" value="GLOBAL TRANSCRIPTIONAL REGULATOR CODY"/>
    <property type="match status" value="1"/>
</dbReference>
<dbReference type="PANTHER" id="PTHR40062">
    <property type="entry name" value="GTP-SENSING TRANSCRIPTIONAL PLEIOTROPIC REPRESSOR CODY"/>
    <property type="match status" value="1"/>
</dbReference>
<dbReference type="Pfam" id="PF06018">
    <property type="entry name" value="CodY"/>
    <property type="match status" value="1"/>
</dbReference>
<dbReference type="Pfam" id="PF08222">
    <property type="entry name" value="HTH_CodY"/>
    <property type="match status" value="1"/>
</dbReference>
<dbReference type="PIRSF" id="PIRSF011572">
    <property type="entry name" value="GTP_sensing_CodY"/>
    <property type="match status" value="1"/>
</dbReference>
<dbReference type="SUPFAM" id="SSF46785">
    <property type="entry name" value="Winged helix' DNA-binding domain"/>
    <property type="match status" value="1"/>
</dbReference>
<evidence type="ECO:0000255" key="1">
    <source>
        <dbReference type="HAMAP-Rule" id="MF_00621"/>
    </source>
</evidence>
<organism>
    <name type="scientific">Bacillus cytotoxicus (strain DSM 22905 / CIP 110041 / 391-98 / NVH 391-98)</name>
    <dbReference type="NCBI Taxonomy" id="315749"/>
    <lineage>
        <taxon>Bacteria</taxon>
        <taxon>Bacillati</taxon>
        <taxon>Bacillota</taxon>
        <taxon>Bacilli</taxon>
        <taxon>Bacillales</taxon>
        <taxon>Bacillaceae</taxon>
        <taxon>Bacillus</taxon>
        <taxon>Bacillus cereus group</taxon>
    </lineage>
</organism>
<comment type="function">
    <text evidence="1">DNA-binding global transcriptional regulator which is involved in the adaptive response to starvation and acts by directly or indirectly controlling the expression of numerous genes in response to nutrient availability. During rapid exponential growth, CodY is highly active and represses genes whose products allow adaptation to nutrient depletion.</text>
</comment>
<comment type="subcellular location">
    <subcellularLocation>
        <location evidence="1">Cytoplasm</location>
    </subcellularLocation>
</comment>
<comment type="similarity">
    <text evidence="1">Belongs to the CodY family.</text>
</comment>
<keyword id="KW-0963">Cytoplasm</keyword>
<keyword id="KW-0238">DNA-binding</keyword>
<keyword id="KW-0597">Phosphoprotein</keyword>
<keyword id="KW-0678">Repressor</keyword>
<keyword id="KW-0804">Transcription</keyword>
<keyword id="KW-0805">Transcription regulation</keyword>
<proteinExistence type="inferred from homology"/>
<feature type="chain" id="PRO_1000082585" description="Global transcriptional regulator CodY">
    <location>
        <begin position="1"/>
        <end position="259"/>
    </location>
</feature>
<feature type="DNA-binding region" description="H-T-H motif" evidence="1">
    <location>
        <begin position="203"/>
        <end position="222"/>
    </location>
</feature>
<feature type="region of interest" description="GAF domain" evidence="1">
    <location>
        <begin position="1"/>
        <end position="155"/>
    </location>
</feature>
<feature type="modified residue" description="Phosphoserine" evidence="1">
    <location>
        <position position="215"/>
    </location>
</feature>
<sequence length="259" mass="28843">MELLAKTRKLNALLQSAAGKPVNFREMSDTMCEVIEANVFVVSRRGKLLGYAIHQQIENERMKQMLAERQFPEEYTQNLFNVTETSSNLDVNSEYTAFPVENKDLFGQGLTTIVPIVGGGERLGTLVLARLGREFLDDDLILAEYSATVVGMEILREKAEEIEEEARSKAVVQMAISSLSYSELEAIEHIFEELNGTEGLLVASKIADRVGITRSVIVNALRKLESAGVIESRSLGMKGTYIKVLNDKFLHELAKLKTN</sequence>
<accession>A7GRF8</accession>
<gene>
    <name evidence="1" type="primary">codY</name>
    <name type="ordered locus">Bcer98_2480</name>
</gene>
<protein>
    <recommendedName>
        <fullName evidence="1">Global transcriptional regulator CodY</fullName>
    </recommendedName>
</protein>
<name>CODY_BACCN</name>
<reference key="1">
    <citation type="journal article" date="2008" name="Chem. Biol. Interact.">
        <title>Extending the Bacillus cereus group genomics to putative food-borne pathogens of different toxicity.</title>
        <authorList>
            <person name="Lapidus A."/>
            <person name="Goltsman E."/>
            <person name="Auger S."/>
            <person name="Galleron N."/>
            <person name="Segurens B."/>
            <person name="Dossat C."/>
            <person name="Land M.L."/>
            <person name="Broussolle V."/>
            <person name="Brillard J."/>
            <person name="Guinebretiere M.-H."/>
            <person name="Sanchis V."/>
            <person name="Nguen-the C."/>
            <person name="Lereclus D."/>
            <person name="Richardson P."/>
            <person name="Wincker P."/>
            <person name="Weissenbach J."/>
            <person name="Ehrlich S.D."/>
            <person name="Sorokin A."/>
        </authorList>
    </citation>
    <scope>NUCLEOTIDE SEQUENCE [LARGE SCALE GENOMIC DNA]</scope>
    <source>
        <strain>DSM 22905 / CIP 110041 / 391-98 / NVH 391-98</strain>
    </source>
</reference>